<protein>
    <recommendedName>
        <fullName>Uncharacterized protein YwfO</fullName>
    </recommendedName>
</protein>
<sequence>MAYPNGKLSEEKVFKDPVHRYVHVRDKLIWDLIGTREFQRLRRIKQLGTTYLTFHGAEHSRFNHSLGVYEIVRRMVDDVFKGRPEWDDSERELCLAAALLHDLGHGPFSHSFEKVFHLDHEDFTRGIILGDTEVNQVLRKVSPGFPQDVAEVIAKTYKNKQVVSLISSQIDADRMDYLQRDAYYTGVSYGHFDMERILRVMRPREDQIVIKESGMHAVEDYIMSRYQMYWQVYFHPVTRSAEVILTKILHRAKQLHDEGYVFTHAPVHFYSIFEGKLTLEDYVKLDESIILYYFQAWEDEEDAILSDLCRRFINRQLFQYVEFNPNEEMSAYFELTSLFKEAGIDPSYYLVVDSSSDLPYDFYRPGEEEERLPIHLLTQNGQIKELSRQSAIVESISGKRRTDHKLYYPKDLICDGTKHPEAKMKIRQLLGLT</sequence>
<accession>P39651</accession>
<gene>
    <name type="primary">ywfO</name>
    <name type="ordered locus">BSU37600</name>
    <name type="ORF">ipa-93d</name>
</gene>
<feature type="chain" id="PRO_0000049973" description="Uncharacterized protein YwfO">
    <location>
        <begin position="1"/>
        <end position="433"/>
    </location>
</feature>
<feature type="domain" description="HD" evidence="1">
    <location>
        <begin position="61"/>
        <end position="178"/>
    </location>
</feature>
<reference key="1">
    <citation type="journal article" date="1997" name="Microbiology">
        <title>The Bacillus subtilis genome from gerBC (311 degrees) to licR (334 degrees).</title>
        <authorList>
            <person name="Presecan E."/>
            <person name="Moszer I."/>
            <person name="Boursier L."/>
            <person name="Cruz Ramos H."/>
            <person name="De La Fuente V."/>
            <person name="Hullo M.-F."/>
            <person name="Lelong C."/>
            <person name="Schleich S."/>
            <person name="Sekowska A."/>
            <person name="Song B.H."/>
            <person name="Villani G."/>
            <person name="Kunst F."/>
            <person name="Danchin A."/>
            <person name="Glaser P."/>
        </authorList>
    </citation>
    <scope>NUCLEOTIDE SEQUENCE [GENOMIC DNA]</scope>
    <source>
        <strain>168</strain>
    </source>
</reference>
<reference key="2">
    <citation type="journal article" date="1997" name="Nature">
        <title>The complete genome sequence of the Gram-positive bacterium Bacillus subtilis.</title>
        <authorList>
            <person name="Kunst F."/>
            <person name="Ogasawara N."/>
            <person name="Moszer I."/>
            <person name="Albertini A.M."/>
            <person name="Alloni G."/>
            <person name="Azevedo V."/>
            <person name="Bertero M.G."/>
            <person name="Bessieres P."/>
            <person name="Bolotin A."/>
            <person name="Borchert S."/>
            <person name="Borriss R."/>
            <person name="Boursier L."/>
            <person name="Brans A."/>
            <person name="Braun M."/>
            <person name="Brignell S.C."/>
            <person name="Bron S."/>
            <person name="Brouillet S."/>
            <person name="Bruschi C.V."/>
            <person name="Caldwell B."/>
            <person name="Capuano V."/>
            <person name="Carter N.M."/>
            <person name="Choi S.-K."/>
            <person name="Codani J.-J."/>
            <person name="Connerton I.F."/>
            <person name="Cummings N.J."/>
            <person name="Daniel R.A."/>
            <person name="Denizot F."/>
            <person name="Devine K.M."/>
            <person name="Duesterhoeft A."/>
            <person name="Ehrlich S.D."/>
            <person name="Emmerson P.T."/>
            <person name="Entian K.-D."/>
            <person name="Errington J."/>
            <person name="Fabret C."/>
            <person name="Ferrari E."/>
            <person name="Foulger D."/>
            <person name="Fritz C."/>
            <person name="Fujita M."/>
            <person name="Fujita Y."/>
            <person name="Fuma S."/>
            <person name="Galizzi A."/>
            <person name="Galleron N."/>
            <person name="Ghim S.-Y."/>
            <person name="Glaser P."/>
            <person name="Goffeau A."/>
            <person name="Golightly E.J."/>
            <person name="Grandi G."/>
            <person name="Guiseppi G."/>
            <person name="Guy B.J."/>
            <person name="Haga K."/>
            <person name="Haiech J."/>
            <person name="Harwood C.R."/>
            <person name="Henaut A."/>
            <person name="Hilbert H."/>
            <person name="Holsappel S."/>
            <person name="Hosono S."/>
            <person name="Hullo M.-F."/>
            <person name="Itaya M."/>
            <person name="Jones L.-M."/>
            <person name="Joris B."/>
            <person name="Karamata D."/>
            <person name="Kasahara Y."/>
            <person name="Klaerr-Blanchard M."/>
            <person name="Klein C."/>
            <person name="Kobayashi Y."/>
            <person name="Koetter P."/>
            <person name="Koningstein G."/>
            <person name="Krogh S."/>
            <person name="Kumano M."/>
            <person name="Kurita K."/>
            <person name="Lapidus A."/>
            <person name="Lardinois S."/>
            <person name="Lauber J."/>
            <person name="Lazarevic V."/>
            <person name="Lee S.-M."/>
            <person name="Levine A."/>
            <person name="Liu H."/>
            <person name="Masuda S."/>
            <person name="Mauel C."/>
            <person name="Medigue C."/>
            <person name="Medina N."/>
            <person name="Mellado R.P."/>
            <person name="Mizuno M."/>
            <person name="Moestl D."/>
            <person name="Nakai S."/>
            <person name="Noback M."/>
            <person name="Noone D."/>
            <person name="O'Reilly M."/>
            <person name="Ogawa K."/>
            <person name="Ogiwara A."/>
            <person name="Oudega B."/>
            <person name="Park S.-H."/>
            <person name="Parro V."/>
            <person name="Pohl T.M."/>
            <person name="Portetelle D."/>
            <person name="Porwollik S."/>
            <person name="Prescott A.M."/>
            <person name="Presecan E."/>
            <person name="Pujic P."/>
            <person name="Purnelle B."/>
            <person name="Rapoport G."/>
            <person name="Rey M."/>
            <person name="Reynolds S."/>
            <person name="Rieger M."/>
            <person name="Rivolta C."/>
            <person name="Rocha E."/>
            <person name="Roche B."/>
            <person name="Rose M."/>
            <person name="Sadaie Y."/>
            <person name="Sato T."/>
            <person name="Scanlan E."/>
            <person name="Schleich S."/>
            <person name="Schroeter R."/>
            <person name="Scoffone F."/>
            <person name="Sekiguchi J."/>
            <person name="Sekowska A."/>
            <person name="Seror S.J."/>
            <person name="Serror P."/>
            <person name="Shin B.-S."/>
            <person name="Soldo B."/>
            <person name="Sorokin A."/>
            <person name="Tacconi E."/>
            <person name="Takagi T."/>
            <person name="Takahashi H."/>
            <person name="Takemaru K."/>
            <person name="Takeuchi M."/>
            <person name="Tamakoshi A."/>
            <person name="Tanaka T."/>
            <person name="Terpstra P."/>
            <person name="Tognoni A."/>
            <person name="Tosato V."/>
            <person name="Uchiyama S."/>
            <person name="Vandenbol M."/>
            <person name="Vannier F."/>
            <person name="Vassarotti A."/>
            <person name="Viari A."/>
            <person name="Wambutt R."/>
            <person name="Wedler E."/>
            <person name="Wedler H."/>
            <person name="Weitzenegger T."/>
            <person name="Winters P."/>
            <person name="Wipat A."/>
            <person name="Yamamoto H."/>
            <person name="Yamane K."/>
            <person name="Yasumoto K."/>
            <person name="Yata K."/>
            <person name="Yoshida K."/>
            <person name="Yoshikawa H.-F."/>
            <person name="Zumstein E."/>
            <person name="Yoshikawa H."/>
            <person name="Danchin A."/>
        </authorList>
    </citation>
    <scope>NUCLEOTIDE SEQUENCE [LARGE SCALE GENOMIC DNA]</scope>
    <source>
        <strain>168</strain>
    </source>
</reference>
<reference key="3">
    <citation type="journal article" date="1993" name="Mol. Microbiol.">
        <title>Bacillus subtilis genome project: cloning and sequencing of the 97 kb region from 325 degrees to 333 degrees.</title>
        <authorList>
            <person name="Glaser P."/>
            <person name="Kunst F."/>
            <person name="Arnaud M."/>
            <person name="Coudart M.P."/>
            <person name="Gonzales W."/>
            <person name="Hullo M.-F."/>
            <person name="Ionescu M."/>
            <person name="Lubochinsky B."/>
            <person name="Marcelino L."/>
            <person name="Moszer I."/>
            <person name="Presecan E."/>
            <person name="Santana M."/>
            <person name="Schneider E."/>
            <person name="Schweizer J."/>
            <person name="Vertes A."/>
            <person name="Rapoport G."/>
            <person name="Danchin A."/>
        </authorList>
    </citation>
    <scope>NUCLEOTIDE SEQUENCE [GENOMIC DNA] OF 1-97</scope>
    <source>
        <strain>168</strain>
    </source>
</reference>
<name>YWFO_BACSU</name>
<dbReference type="EMBL" id="Z80355">
    <property type="protein sequence ID" value="CAB02494.1"/>
    <property type="molecule type" value="Genomic_DNA"/>
</dbReference>
<dbReference type="EMBL" id="AL009126">
    <property type="protein sequence ID" value="CAB15787.1"/>
    <property type="molecule type" value="Genomic_DNA"/>
</dbReference>
<dbReference type="EMBL" id="X73124">
    <property type="protein sequence ID" value="CAA51649.1"/>
    <property type="molecule type" value="Genomic_DNA"/>
</dbReference>
<dbReference type="PIR" id="G70056">
    <property type="entry name" value="G70056"/>
</dbReference>
<dbReference type="RefSeq" id="NP_391640.1">
    <property type="nucleotide sequence ID" value="NC_000964.3"/>
</dbReference>
<dbReference type="RefSeq" id="WP_003243873.1">
    <property type="nucleotide sequence ID" value="NZ_OZ025638.1"/>
</dbReference>
<dbReference type="SMR" id="P39651"/>
<dbReference type="FunCoup" id="P39651">
    <property type="interactions" value="317"/>
</dbReference>
<dbReference type="STRING" id="224308.BSU37600"/>
<dbReference type="PaxDb" id="224308-BSU37600"/>
<dbReference type="DNASU" id="937082"/>
<dbReference type="EnsemblBacteria" id="CAB15787">
    <property type="protein sequence ID" value="CAB15787"/>
    <property type="gene ID" value="BSU_37600"/>
</dbReference>
<dbReference type="GeneID" id="937082"/>
<dbReference type="KEGG" id="bsu:BSU37600"/>
<dbReference type="PATRIC" id="fig|224308.179.peg.4072"/>
<dbReference type="eggNOG" id="COG1078">
    <property type="taxonomic scope" value="Bacteria"/>
</dbReference>
<dbReference type="InParanoid" id="P39651"/>
<dbReference type="OrthoDB" id="9803619at2"/>
<dbReference type="PhylomeDB" id="P39651"/>
<dbReference type="BioCyc" id="BSUB:BSU37600-MONOMER"/>
<dbReference type="Proteomes" id="UP000001570">
    <property type="component" value="Chromosome"/>
</dbReference>
<dbReference type="GO" id="GO:0008832">
    <property type="term" value="F:dGTPase activity"/>
    <property type="evidence" value="ECO:0000318"/>
    <property type="project" value="GO_Central"/>
</dbReference>
<dbReference type="GO" id="GO:0006203">
    <property type="term" value="P:dGTP catabolic process"/>
    <property type="evidence" value="ECO:0000318"/>
    <property type="project" value="GO_Central"/>
</dbReference>
<dbReference type="CDD" id="cd00077">
    <property type="entry name" value="HDc"/>
    <property type="match status" value="1"/>
</dbReference>
<dbReference type="FunFam" id="1.10.3210.10:FF:000014">
    <property type="entry name" value="HD domain-containing protein"/>
    <property type="match status" value="1"/>
</dbReference>
<dbReference type="Gene3D" id="1.10.3210.10">
    <property type="entry name" value="Hypothetical protein af1432"/>
    <property type="match status" value="1"/>
</dbReference>
<dbReference type="InterPro" id="IPR050135">
    <property type="entry name" value="dGTPase-like"/>
</dbReference>
<dbReference type="InterPro" id="IPR003607">
    <property type="entry name" value="HD/PDEase_dom"/>
</dbReference>
<dbReference type="InterPro" id="IPR045509">
    <property type="entry name" value="HD_assoc_2"/>
</dbReference>
<dbReference type="InterPro" id="IPR006674">
    <property type="entry name" value="HD_domain"/>
</dbReference>
<dbReference type="PANTHER" id="PTHR11373">
    <property type="entry name" value="DEOXYNUCLEOSIDE TRIPHOSPHATE TRIPHOSPHOHYDROLASE"/>
    <property type="match status" value="1"/>
</dbReference>
<dbReference type="PANTHER" id="PTHR11373:SF4">
    <property type="entry name" value="DEOXYNUCLEOSIDE TRIPHOSPHATE TRIPHOSPHOHYDROLASE SAMHD1"/>
    <property type="match status" value="1"/>
</dbReference>
<dbReference type="Pfam" id="PF01966">
    <property type="entry name" value="HD"/>
    <property type="match status" value="1"/>
</dbReference>
<dbReference type="Pfam" id="PF19276">
    <property type="entry name" value="HD_assoc_2"/>
    <property type="match status" value="1"/>
</dbReference>
<dbReference type="SMART" id="SM00471">
    <property type="entry name" value="HDc"/>
    <property type="match status" value="1"/>
</dbReference>
<dbReference type="SUPFAM" id="SSF109604">
    <property type="entry name" value="HD-domain/PDEase-like"/>
    <property type="match status" value="1"/>
</dbReference>
<dbReference type="PROSITE" id="PS51831">
    <property type="entry name" value="HD"/>
    <property type="match status" value="1"/>
</dbReference>
<keyword id="KW-1185">Reference proteome</keyword>
<organism>
    <name type="scientific">Bacillus subtilis (strain 168)</name>
    <dbReference type="NCBI Taxonomy" id="224308"/>
    <lineage>
        <taxon>Bacteria</taxon>
        <taxon>Bacillati</taxon>
        <taxon>Bacillota</taxon>
        <taxon>Bacilli</taxon>
        <taxon>Bacillales</taxon>
        <taxon>Bacillaceae</taxon>
        <taxon>Bacillus</taxon>
    </lineage>
</organism>
<evidence type="ECO:0000255" key="1">
    <source>
        <dbReference type="PROSITE-ProRule" id="PRU01175"/>
    </source>
</evidence>
<proteinExistence type="predicted"/>